<accession>A4TRK3</accession>
<sequence length="312" mass="32625">MKVAVLGAAGGIGQALALLLKTQLPSGSDLSLYDIAPVTPGVAVDLSHIPTAVNIKGFSGEDATPALQGADIVLISAGVARKPGMDRSDLFNVNAGIVRNLVEQIARTCPNALIGIITNPVNTTVAIAAEVLKKAGVYDKNKLFGITTLDTIRSNTFVAELKGKQPQDIEVPVIGGHSGVTILPLLSQIPGVSFTEQEVADLTKRIQNAGTEVVEAKAGGGSATLSMGQAAARFGLSLVRALQGESNVVECSYVEGDGKYARFFAQPILLGKNGVAERKDIGKLSAFEQQALENMLDVLHKDIELGEKFVNQ</sequence>
<evidence type="ECO:0000255" key="1">
    <source>
        <dbReference type="HAMAP-Rule" id="MF_01516"/>
    </source>
</evidence>
<proteinExistence type="inferred from homology"/>
<organism>
    <name type="scientific">Yersinia pestis (strain Pestoides F)</name>
    <dbReference type="NCBI Taxonomy" id="386656"/>
    <lineage>
        <taxon>Bacteria</taxon>
        <taxon>Pseudomonadati</taxon>
        <taxon>Pseudomonadota</taxon>
        <taxon>Gammaproteobacteria</taxon>
        <taxon>Enterobacterales</taxon>
        <taxon>Yersiniaceae</taxon>
        <taxon>Yersinia</taxon>
    </lineage>
</organism>
<feature type="chain" id="PRO_1000068597" description="Malate dehydrogenase">
    <location>
        <begin position="1"/>
        <end position="312"/>
    </location>
</feature>
<feature type="active site" description="Proton acceptor" evidence="1">
    <location>
        <position position="177"/>
    </location>
</feature>
<feature type="binding site" evidence="1">
    <location>
        <begin position="7"/>
        <end position="13"/>
    </location>
    <ligand>
        <name>NAD(+)</name>
        <dbReference type="ChEBI" id="CHEBI:57540"/>
    </ligand>
</feature>
<feature type="binding site" evidence="1">
    <location>
        <position position="34"/>
    </location>
    <ligand>
        <name>NAD(+)</name>
        <dbReference type="ChEBI" id="CHEBI:57540"/>
    </ligand>
</feature>
<feature type="binding site" evidence="1">
    <location>
        <position position="81"/>
    </location>
    <ligand>
        <name>substrate</name>
    </ligand>
</feature>
<feature type="binding site" evidence="1">
    <location>
        <position position="87"/>
    </location>
    <ligand>
        <name>substrate</name>
    </ligand>
</feature>
<feature type="binding site" evidence="1">
    <location>
        <position position="94"/>
    </location>
    <ligand>
        <name>NAD(+)</name>
        <dbReference type="ChEBI" id="CHEBI:57540"/>
    </ligand>
</feature>
<feature type="binding site" evidence="1">
    <location>
        <begin position="117"/>
        <end position="119"/>
    </location>
    <ligand>
        <name>NAD(+)</name>
        <dbReference type="ChEBI" id="CHEBI:57540"/>
    </ligand>
</feature>
<feature type="binding site" evidence="1">
    <location>
        <position position="119"/>
    </location>
    <ligand>
        <name>substrate</name>
    </ligand>
</feature>
<feature type="binding site" evidence="1">
    <location>
        <position position="153"/>
    </location>
    <ligand>
        <name>substrate</name>
    </ligand>
</feature>
<feature type="binding site" evidence="1">
    <location>
        <position position="227"/>
    </location>
    <ligand>
        <name>NAD(+)</name>
        <dbReference type="ChEBI" id="CHEBI:57540"/>
    </ligand>
</feature>
<protein>
    <recommendedName>
        <fullName evidence="1">Malate dehydrogenase</fullName>
        <ecNumber evidence="1">1.1.1.37</ecNumber>
    </recommendedName>
</protein>
<dbReference type="EC" id="1.1.1.37" evidence="1"/>
<dbReference type="EMBL" id="CP000668">
    <property type="protein sequence ID" value="ABP41915.1"/>
    <property type="molecule type" value="Genomic_DNA"/>
</dbReference>
<dbReference type="RefSeq" id="WP_002210174.1">
    <property type="nucleotide sequence ID" value="NZ_CP009715.1"/>
</dbReference>
<dbReference type="SMR" id="A4TRK3"/>
<dbReference type="GeneID" id="57975198"/>
<dbReference type="KEGG" id="ypp:YPDSF_3565"/>
<dbReference type="PATRIC" id="fig|386656.14.peg.221"/>
<dbReference type="GO" id="GO:0005737">
    <property type="term" value="C:cytoplasm"/>
    <property type="evidence" value="ECO:0007669"/>
    <property type="project" value="TreeGrafter"/>
</dbReference>
<dbReference type="GO" id="GO:0030060">
    <property type="term" value="F:L-malate dehydrogenase (NAD+) activity"/>
    <property type="evidence" value="ECO:0007669"/>
    <property type="project" value="UniProtKB-UniRule"/>
</dbReference>
<dbReference type="GO" id="GO:0006108">
    <property type="term" value="P:malate metabolic process"/>
    <property type="evidence" value="ECO:0007669"/>
    <property type="project" value="InterPro"/>
</dbReference>
<dbReference type="GO" id="GO:0006099">
    <property type="term" value="P:tricarboxylic acid cycle"/>
    <property type="evidence" value="ECO:0007669"/>
    <property type="project" value="UniProtKB-UniRule"/>
</dbReference>
<dbReference type="CDD" id="cd01337">
    <property type="entry name" value="MDH_glyoxysomal_mitochondrial"/>
    <property type="match status" value="1"/>
</dbReference>
<dbReference type="FunFam" id="3.40.50.720:FF:000017">
    <property type="entry name" value="Malate dehydrogenase"/>
    <property type="match status" value="1"/>
</dbReference>
<dbReference type="FunFam" id="3.90.110.10:FF:000001">
    <property type="entry name" value="Malate dehydrogenase"/>
    <property type="match status" value="1"/>
</dbReference>
<dbReference type="Gene3D" id="3.90.110.10">
    <property type="entry name" value="Lactate dehydrogenase/glycoside hydrolase, family 4, C-terminal"/>
    <property type="match status" value="1"/>
</dbReference>
<dbReference type="Gene3D" id="3.40.50.720">
    <property type="entry name" value="NAD(P)-binding Rossmann-like Domain"/>
    <property type="match status" value="1"/>
</dbReference>
<dbReference type="HAMAP" id="MF_01516">
    <property type="entry name" value="Malate_dehydrog_1"/>
    <property type="match status" value="1"/>
</dbReference>
<dbReference type="InterPro" id="IPR001557">
    <property type="entry name" value="L-lactate/malate_DH"/>
</dbReference>
<dbReference type="InterPro" id="IPR022383">
    <property type="entry name" value="Lactate/malate_DH_C"/>
</dbReference>
<dbReference type="InterPro" id="IPR001236">
    <property type="entry name" value="Lactate/malate_DH_N"/>
</dbReference>
<dbReference type="InterPro" id="IPR015955">
    <property type="entry name" value="Lactate_DH/Glyco_Ohase_4_C"/>
</dbReference>
<dbReference type="InterPro" id="IPR001252">
    <property type="entry name" value="Malate_DH_AS"/>
</dbReference>
<dbReference type="InterPro" id="IPR010097">
    <property type="entry name" value="Malate_DH_type1"/>
</dbReference>
<dbReference type="InterPro" id="IPR023958">
    <property type="entry name" value="Malate_DH_type1_bac"/>
</dbReference>
<dbReference type="InterPro" id="IPR036291">
    <property type="entry name" value="NAD(P)-bd_dom_sf"/>
</dbReference>
<dbReference type="NCBIfam" id="TIGR01772">
    <property type="entry name" value="MDH_euk_gproteo"/>
    <property type="match status" value="1"/>
</dbReference>
<dbReference type="PANTHER" id="PTHR11540">
    <property type="entry name" value="MALATE AND LACTATE DEHYDROGENASE"/>
    <property type="match status" value="1"/>
</dbReference>
<dbReference type="PANTHER" id="PTHR11540:SF16">
    <property type="entry name" value="MALATE DEHYDROGENASE, MITOCHONDRIAL"/>
    <property type="match status" value="1"/>
</dbReference>
<dbReference type="Pfam" id="PF02866">
    <property type="entry name" value="Ldh_1_C"/>
    <property type="match status" value="1"/>
</dbReference>
<dbReference type="Pfam" id="PF00056">
    <property type="entry name" value="Ldh_1_N"/>
    <property type="match status" value="1"/>
</dbReference>
<dbReference type="PIRSF" id="PIRSF000102">
    <property type="entry name" value="Lac_mal_DH"/>
    <property type="match status" value="1"/>
</dbReference>
<dbReference type="SUPFAM" id="SSF56327">
    <property type="entry name" value="LDH C-terminal domain-like"/>
    <property type="match status" value="1"/>
</dbReference>
<dbReference type="SUPFAM" id="SSF51735">
    <property type="entry name" value="NAD(P)-binding Rossmann-fold domains"/>
    <property type="match status" value="1"/>
</dbReference>
<dbReference type="PROSITE" id="PS00068">
    <property type="entry name" value="MDH"/>
    <property type="match status" value="1"/>
</dbReference>
<gene>
    <name evidence="1" type="primary">mdh</name>
    <name type="ordered locus">YPDSF_3565</name>
</gene>
<comment type="function">
    <text evidence="1">Catalyzes the reversible oxidation of malate to oxaloacetate.</text>
</comment>
<comment type="catalytic activity">
    <reaction evidence="1">
        <text>(S)-malate + NAD(+) = oxaloacetate + NADH + H(+)</text>
        <dbReference type="Rhea" id="RHEA:21432"/>
        <dbReference type="ChEBI" id="CHEBI:15378"/>
        <dbReference type="ChEBI" id="CHEBI:15589"/>
        <dbReference type="ChEBI" id="CHEBI:16452"/>
        <dbReference type="ChEBI" id="CHEBI:57540"/>
        <dbReference type="ChEBI" id="CHEBI:57945"/>
        <dbReference type="EC" id="1.1.1.37"/>
    </reaction>
</comment>
<comment type="subunit">
    <text evidence="1">Homodimer.</text>
</comment>
<comment type="similarity">
    <text evidence="1">Belongs to the LDH/MDH superfamily. MDH type 1 family.</text>
</comment>
<reference key="1">
    <citation type="submission" date="2007-02" db="EMBL/GenBank/DDBJ databases">
        <title>Complete sequence of chromosome of Yersinia pestis Pestoides F.</title>
        <authorList>
            <consortium name="US DOE Joint Genome Institute"/>
            <person name="Copeland A."/>
            <person name="Lucas S."/>
            <person name="Lapidus A."/>
            <person name="Barry K."/>
            <person name="Detter J.C."/>
            <person name="Glavina del Rio T."/>
            <person name="Hammon N."/>
            <person name="Israni S."/>
            <person name="Dalin E."/>
            <person name="Tice H."/>
            <person name="Pitluck S."/>
            <person name="Di Bartolo G."/>
            <person name="Chain P."/>
            <person name="Malfatti S."/>
            <person name="Shin M."/>
            <person name="Vergez L."/>
            <person name="Schmutz J."/>
            <person name="Larimer F."/>
            <person name="Land M."/>
            <person name="Hauser L."/>
            <person name="Worsham P."/>
            <person name="Chu M."/>
            <person name="Bearden S."/>
            <person name="Garcia E."/>
            <person name="Richardson P."/>
        </authorList>
    </citation>
    <scope>NUCLEOTIDE SEQUENCE [LARGE SCALE GENOMIC DNA]</scope>
    <source>
        <strain>Pestoides F</strain>
    </source>
</reference>
<name>MDH_YERPP</name>
<keyword id="KW-0520">NAD</keyword>
<keyword id="KW-0560">Oxidoreductase</keyword>
<keyword id="KW-0816">Tricarboxylic acid cycle</keyword>